<comment type="function">
    <text evidence="1">Catalyzes the formation of 5-methyl-uridine at position 1939 (m5U1939) in 23S rRNA.</text>
</comment>
<comment type="catalytic activity">
    <reaction evidence="1">
        <text>uridine(1939) in 23S rRNA + S-adenosyl-L-methionine = 5-methyluridine(1939) in 23S rRNA + S-adenosyl-L-homocysteine + H(+)</text>
        <dbReference type="Rhea" id="RHEA:42908"/>
        <dbReference type="Rhea" id="RHEA-COMP:10278"/>
        <dbReference type="Rhea" id="RHEA-COMP:10279"/>
        <dbReference type="ChEBI" id="CHEBI:15378"/>
        <dbReference type="ChEBI" id="CHEBI:57856"/>
        <dbReference type="ChEBI" id="CHEBI:59789"/>
        <dbReference type="ChEBI" id="CHEBI:65315"/>
        <dbReference type="ChEBI" id="CHEBI:74447"/>
        <dbReference type="EC" id="2.1.1.190"/>
    </reaction>
</comment>
<comment type="similarity">
    <text evidence="1">Belongs to the class I-like SAM-binding methyltransferase superfamily. RNA M5U methyltransferase family. RlmD subfamily.</text>
</comment>
<sequence length="486" mass="52622">MSEPKEPSPALACAAQDGSGLPEGWLQVQSMDLDAQGVARRADGKVVFIDGALPSEWVSASTYRKKNHWEQANLTAIHRESAQRVRPGCPHFGLHAGACGGCKMQHLHMGGQVAVKQRVLEDNLWHLGRVKPAMVLRPIEGPAWGYRYRARLSVRHVIKKGVVLVGFHERKSRYVADMAQCPVLPPHAAALLMPLRSLIAALDAHDSCPQIELACGDSVTALVLRHLQPLSVGDHARLRAFAAEHGVQWWLQPRGPDTVQPLDEGGEQLSYALPDFGITMPFKPTDFTQVNPHINRVLVARALRLLAVRPDERVIDWFCGLGNFTLPLATQARAVLGVEGNAALVARARANHGLNQALAQNHRVLAATDFVACNLFAMTPGMLLGHGAADKWLVDPPREGALALVKALADIEQSRRGAQGATALPAGAEDWVPPRRIVYVSCNPATLARDAALLVHLAGYQCAAAGMVNMFPHTAHVESIAVFERG</sequence>
<organism>
    <name type="scientific">Verminephrobacter eiseniae (strain EF01-2)</name>
    <dbReference type="NCBI Taxonomy" id="391735"/>
    <lineage>
        <taxon>Bacteria</taxon>
        <taxon>Pseudomonadati</taxon>
        <taxon>Pseudomonadota</taxon>
        <taxon>Betaproteobacteria</taxon>
        <taxon>Burkholderiales</taxon>
        <taxon>Comamonadaceae</taxon>
        <taxon>Verminephrobacter</taxon>
    </lineage>
</organism>
<evidence type="ECO:0000255" key="1">
    <source>
        <dbReference type="HAMAP-Rule" id="MF_01010"/>
    </source>
</evidence>
<proteinExistence type="inferred from homology"/>
<accession>A1WME3</accession>
<reference key="1">
    <citation type="submission" date="2006-12" db="EMBL/GenBank/DDBJ databases">
        <title>Complete sequence of chromosome 1 of Verminephrobacter eiseniae EF01-2.</title>
        <authorList>
            <person name="Copeland A."/>
            <person name="Lucas S."/>
            <person name="Lapidus A."/>
            <person name="Barry K."/>
            <person name="Detter J.C."/>
            <person name="Glavina del Rio T."/>
            <person name="Dalin E."/>
            <person name="Tice H."/>
            <person name="Pitluck S."/>
            <person name="Chertkov O."/>
            <person name="Brettin T."/>
            <person name="Bruce D."/>
            <person name="Han C."/>
            <person name="Tapia R."/>
            <person name="Gilna P."/>
            <person name="Schmutz J."/>
            <person name="Larimer F."/>
            <person name="Land M."/>
            <person name="Hauser L."/>
            <person name="Kyrpides N."/>
            <person name="Kim E."/>
            <person name="Stahl D."/>
            <person name="Richardson P."/>
        </authorList>
    </citation>
    <scope>NUCLEOTIDE SEQUENCE [LARGE SCALE GENOMIC DNA]</scope>
    <source>
        <strain>EF01-2</strain>
    </source>
</reference>
<protein>
    <recommendedName>
        <fullName evidence="1">23S rRNA (uracil(1939)-C(5))-methyltransferase RlmD</fullName>
        <ecNumber evidence="1">2.1.1.190</ecNumber>
    </recommendedName>
    <alternativeName>
        <fullName evidence="1">23S rRNA(m5U1939)-methyltransferase</fullName>
    </alternativeName>
</protein>
<gene>
    <name evidence="1" type="primary">rlmD</name>
    <name type="synonym">rumA</name>
    <name type="ordered locus">Veis_3067</name>
</gene>
<name>RLMD_VEREI</name>
<keyword id="KW-0004">4Fe-4S</keyword>
<keyword id="KW-0408">Iron</keyword>
<keyword id="KW-0411">Iron-sulfur</keyword>
<keyword id="KW-0479">Metal-binding</keyword>
<keyword id="KW-0489">Methyltransferase</keyword>
<keyword id="KW-1185">Reference proteome</keyword>
<keyword id="KW-0698">rRNA processing</keyword>
<keyword id="KW-0949">S-adenosyl-L-methionine</keyword>
<keyword id="KW-0808">Transferase</keyword>
<dbReference type="EC" id="2.1.1.190" evidence="1"/>
<dbReference type="EMBL" id="CP000542">
    <property type="protein sequence ID" value="ABM58800.1"/>
    <property type="molecule type" value="Genomic_DNA"/>
</dbReference>
<dbReference type="RefSeq" id="WP_011810795.1">
    <property type="nucleotide sequence ID" value="NC_008786.1"/>
</dbReference>
<dbReference type="SMR" id="A1WME3"/>
<dbReference type="STRING" id="391735.Veis_3067"/>
<dbReference type="GeneID" id="76461532"/>
<dbReference type="KEGG" id="vei:Veis_3067"/>
<dbReference type="eggNOG" id="COG2265">
    <property type="taxonomic scope" value="Bacteria"/>
</dbReference>
<dbReference type="HOGENOM" id="CLU_014689_8_2_4"/>
<dbReference type="OrthoDB" id="9804590at2"/>
<dbReference type="Proteomes" id="UP000000374">
    <property type="component" value="Chromosome"/>
</dbReference>
<dbReference type="GO" id="GO:0051539">
    <property type="term" value="F:4 iron, 4 sulfur cluster binding"/>
    <property type="evidence" value="ECO:0007669"/>
    <property type="project" value="UniProtKB-KW"/>
</dbReference>
<dbReference type="GO" id="GO:0005506">
    <property type="term" value="F:iron ion binding"/>
    <property type="evidence" value="ECO:0007669"/>
    <property type="project" value="UniProtKB-UniRule"/>
</dbReference>
<dbReference type="GO" id="GO:0003723">
    <property type="term" value="F:RNA binding"/>
    <property type="evidence" value="ECO:0007669"/>
    <property type="project" value="InterPro"/>
</dbReference>
<dbReference type="GO" id="GO:0070041">
    <property type="term" value="F:rRNA (uridine-C5-)-methyltransferase activity"/>
    <property type="evidence" value="ECO:0007669"/>
    <property type="project" value="UniProtKB-UniRule"/>
</dbReference>
<dbReference type="GO" id="GO:0070475">
    <property type="term" value="P:rRNA base methylation"/>
    <property type="evidence" value="ECO:0007669"/>
    <property type="project" value="TreeGrafter"/>
</dbReference>
<dbReference type="CDD" id="cd02440">
    <property type="entry name" value="AdoMet_MTases"/>
    <property type="match status" value="1"/>
</dbReference>
<dbReference type="Gene3D" id="2.40.50.1070">
    <property type="match status" value="1"/>
</dbReference>
<dbReference type="Gene3D" id="2.40.50.140">
    <property type="entry name" value="Nucleic acid-binding proteins"/>
    <property type="match status" value="1"/>
</dbReference>
<dbReference type="Gene3D" id="3.40.50.150">
    <property type="entry name" value="Vaccinia Virus protein VP39"/>
    <property type="match status" value="1"/>
</dbReference>
<dbReference type="HAMAP" id="MF_01010">
    <property type="entry name" value="23SrRNA_methyltr_RlmD"/>
    <property type="match status" value="1"/>
</dbReference>
<dbReference type="InterPro" id="IPR001566">
    <property type="entry name" value="23S_rRNA_MeTrfase_RlmD"/>
</dbReference>
<dbReference type="InterPro" id="IPR030391">
    <property type="entry name" value="MeTrfase_TrmA_CS"/>
</dbReference>
<dbReference type="InterPro" id="IPR012340">
    <property type="entry name" value="NA-bd_OB-fold"/>
</dbReference>
<dbReference type="InterPro" id="IPR029063">
    <property type="entry name" value="SAM-dependent_MTases_sf"/>
</dbReference>
<dbReference type="InterPro" id="IPR010280">
    <property type="entry name" value="U5_MeTrfase_fam"/>
</dbReference>
<dbReference type="NCBIfam" id="NF009639">
    <property type="entry name" value="PRK13168.1"/>
    <property type="match status" value="1"/>
</dbReference>
<dbReference type="NCBIfam" id="TIGR00479">
    <property type="entry name" value="rumA"/>
    <property type="match status" value="1"/>
</dbReference>
<dbReference type="PANTHER" id="PTHR11061">
    <property type="entry name" value="RNA M5U METHYLTRANSFERASE"/>
    <property type="match status" value="1"/>
</dbReference>
<dbReference type="PANTHER" id="PTHR11061:SF30">
    <property type="entry name" value="TRNA (URACIL(54)-C(5))-METHYLTRANSFERASE"/>
    <property type="match status" value="1"/>
</dbReference>
<dbReference type="Pfam" id="PF05958">
    <property type="entry name" value="tRNA_U5-meth_tr"/>
    <property type="match status" value="1"/>
</dbReference>
<dbReference type="SUPFAM" id="SSF50249">
    <property type="entry name" value="Nucleic acid-binding proteins"/>
    <property type="match status" value="1"/>
</dbReference>
<dbReference type="SUPFAM" id="SSF53335">
    <property type="entry name" value="S-adenosyl-L-methionine-dependent methyltransferases"/>
    <property type="match status" value="1"/>
</dbReference>
<dbReference type="PROSITE" id="PS51687">
    <property type="entry name" value="SAM_MT_RNA_M5U"/>
    <property type="match status" value="1"/>
</dbReference>
<dbReference type="PROSITE" id="PS01231">
    <property type="entry name" value="TRMA_2"/>
    <property type="match status" value="1"/>
</dbReference>
<feature type="chain" id="PRO_1000148882" description="23S rRNA (uracil(1939)-C(5))-methyltransferase RlmD">
    <location>
        <begin position="1"/>
        <end position="486"/>
    </location>
</feature>
<feature type="domain" description="TRAM" evidence="1">
    <location>
        <begin position="14"/>
        <end position="76"/>
    </location>
</feature>
<feature type="active site" description="Nucleophile" evidence="1">
    <location>
        <position position="442"/>
    </location>
</feature>
<feature type="binding site" evidence="1">
    <location>
        <position position="89"/>
    </location>
    <ligand>
        <name>[4Fe-4S] cluster</name>
        <dbReference type="ChEBI" id="CHEBI:49883"/>
    </ligand>
</feature>
<feature type="binding site" evidence="1">
    <location>
        <position position="99"/>
    </location>
    <ligand>
        <name>[4Fe-4S] cluster</name>
        <dbReference type="ChEBI" id="CHEBI:49883"/>
    </ligand>
</feature>
<feature type="binding site" evidence="1">
    <location>
        <position position="102"/>
    </location>
    <ligand>
        <name>[4Fe-4S] cluster</name>
        <dbReference type="ChEBI" id="CHEBI:49883"/>
    </ligand>
</feature>
<feature type="binding site" evidence="1">
    <location>
        <position position="181"/>
    </location>
    <ligand>
        <name>[4Fe-4S] cluster</name>
        <dbReference type="ChEBI" id="CHEBI:49883"/>
    </ligand>
</feature>
<feature type="binding site" evidence="1">
    <location>
        <position position="289"/>
    </location>
    <ligand>
        <name>S-adenosyl-L-methionine</name>
        <dbReference type="ChEBI" id="CHEBI:59789"/>
    </ligand>
</feature>
<feature type="binding site" evidence="1">
    <location>
        <position position="318"/>
    </location>
    <ligand>
        <name>S-adenosyl-L-methionine</name>
        <dbReference type="ChEBI" id="CHEBI:59789"/>
    </ligand>
</feature>
<feature type="binding site" evidence="1">
    <location>
        <position position="323"/>
    </location>
    <ligand>
        <name>S-adenosyl-L-methionine</name>
        <dbReference type="ChEBI" id="CHEBI:59789"/>
    </ligand>
</feature>
<feature type="binding site" evidence="1">
    <location>
        <position position="339"/>
    </location>
    <ligand>
        <name>S-adenosyl-L-methionine</name>
        <dbReference type="ChEBI" id="CHEBI:59789"/>
    </ligand>
</feature>
<feature type="binding site" evidence="1">
    <location>
        <position position="374"/>
    </location>
    <ligand>
        <name>S-adenosyl-L-methionine</name>
        <dbReference type="ChEBI" id="CHEBI:59789"/>
    </ligand>
</feature>
<feature type="binding site" evidence="1">
    <location>
        <position position="395"/>
    </location>
    <ligand>
        <name>S-adenosyl-L-methionine</name>
        <dbReference type="ChEBI" id="CHEBI:59789"/>
    </ligand>
</feature>